<protein>
    <recommendedName>
        <fullName evidence="1">Indole-3-glycerol phosphate synthase</fullName>
        <shortName evidence="1">IGPS</shortName>
        <ecNumber evidence="1">4.1.1.48</ecNumber>
    </recommendedName>
</protein>
<gene>
    <name evidence="1" type="primary">trpC</name>
    <name type="ordered locus">NGR_c14590</name>
</gene>
<proteinExistence type="inferred from homology"/>
<reference key="1">
    <citation type="journal article" date="2009" name="Appl. Environ. Microbiol.">
        <title>Rhizobium sp. strain NGR234 possesses a remarkable number of secretion systems.</title>
        <authorList>
            <person name="Schmeisser C."/>
            <person name="Liesegang H."/>
            <person name="Krysciak D."/>
            <person name="Bakkou N."/>
            <person name="Le Quere A."/>
            <person name="Wollherr A."/>
            <person name="Heinemeyer I."/>
            <person name="Morgenstern B."/>
            <person name="Pommerening-Roeser A."/>
            <person name="Flores M."/>
            <person name="Palacios R."/>
            <person name="Brenner S."/>
            <person name="Gottschalk G."/>
            <person name="Schmitz R.A."/>
            <person name="Broughton W.J."/>
            <person name="Perret X."/>
            <person name="Strittmatter A.W."/>
            <person name="Streit W.R."/>
        </authorList>
    </citation>
    <scope>NUCLEOTIDE SEQUENCE [LARGE SCALE GENOMIC DNA]</scope>
    <source>
        <strain>NBRC 101917 / NGR234</strain>
    </source>
</reference>
<evidence type="ECO:0000255" key="1">
    <source>
        <dbReference type="HAMAP-Rule" id="MF_00134"/>
    </source>
</evidence>
<accession>C3MCF2</accession>
<comment type="catalytic activity">
    <reaction evidence="1">
        <text>1-(2-carboxyphenylamino)-1-deoxy-D-ribulose 5-phosphate + H(+) = (1S,2R)-1-C-(indol-3-yl)glycerol 3-phosphate + CO2 + H2O</text>
        <dbReference type="Rhea" id="RHEA:23476"/>
        <dbReference type="ChEBI" id="CHEBI:15377"/>
        <dbReference type="ChEBI" id="CHEBI:15378"/>
        <dbReference type="ChEBI" id="CHEBI:16526"/>
        <dbReference type="ChEBI" id="CHEBI:58613"/>
        <dbReference type="ChEBI" id="CHEBI:58866"/>
        <dbReference type="EC" id="4.1.1.48"/>
    </reaction>
</comment>
<comment type="pathway">
    <text evidence="1">Amino-acid biosynthesis; L-tryptophan biosynthesis; L-tryptophan from chorismate: step 4/5.</text>
</comment>
<comment type="similarity">
    <text evidence="1">Belongs to the TrpC family.</text>
</comment>
<dbReference type="EC" id="4.1.1.48" evidence="1"/>
<dbReference type="EMBL" id="CP001389">
    <property type="protein sequence ID" value="ACP25231.1"/>
    <property type="molecule type" value="Genomic_DNA"/>
</dbReference>
<dbReference type="RefSeq" id="WP_012708005.1">
    <property type="nucleotide sequence ID" value="NC_012587.1"/>
</dbReference>
<dbReference type="RefSeq" id="YP_002825984.1">
    <property type="nucleotide sequence ID" value="NC_012587.1"/>
</dbReference>
<dbReference type="SMR" id="C3MCF2"/>
<dbReference type="STRING" id="394.NGR_c14590"/>
<dbReference type="KEGG" id="rhi:NGR_c14590"/>
<dbReference type="PATRIC" id="fig|394.7.peg.4272"/>
<dbReference type="eggNOG" id="COG0134">
    <property type="taxonomic scope" value="Bacteria"/>
</dbReference>
<dbReference type="HOGENOM" id="CLU_034247_2_0_5"/>
<dbReference type="OrthoDB" id="9804217at2"/>
<dbReference type="UniPathway" id="UPA00035">
    <property type="reaction ID" value="UER00043"/>
</dbReference>
<dbReference type="Proteomes" id="UP000001054">
    <property type="component" value="Chromosome"/>
</dbReference>
<dbReference type="GO" id="GO:0004425">
    <property type="term" value="F:indole-3-glycerol-phosphate synthase activity"/>
    <property type="evidence" value="ECO:0007669"/>
    <property type="project" value="UniProtKB-UniRule"/>
</dbReference>
<dbReference type="GO" id="GO:0004640">
    <property type="term" value="F:phosphoribosylanthranilate isomerase activity"/>
    <property type="evidence" value="ECO:0007669"/>
    <property type="project" value="TreeGrafter"/>
</dbReference>
<dbReference type="GO" id="GO:0000162">
    <property type="term" value="P:L-tryptophan biosynthetic process"/>
    <property type="evidence" value="ECO:0007669"/>
    <property type="project" value="UniProtKB-UniRule"/>
</dbReference>
<dbReference type="CDD" id="cd00331">
    <property type="entry name" value="IGPS"/>
    <property type="match status" value="1"/>
</dbReference>
<dbReference type="FunFam" id="3.20.20.70:FF:000024">
    <property type="entry name" value="Indole-3-glycerol phosphate synthase"/>
    <property type="match status" value="1"/>
</dbReference>
<dbReference type="Gene3D" id="3.20.20.70">
    <property type="entry name" value="Aldolase class I"/>
    <property type="match status" value="1"/>
</dbReference>
<dbReference type="HAMAP" id="MF_00134_B">
    <property type="entry name" value="IGPS_B"/>
    <property type="match status" value="1"/>
</dbReference>
<dbReference type="InterPro" id="IPR013785">
    <property type="entry name" value="Aldolase_TIM"/>
</dbReference>
<dbReference type="InterPro" id="IPR045186">
    <property type="entry name" value="Indole-3-glycerol_P_synth"/>
</dbReference>
<dbReference type="InterPro" id="IPR013798">
    <property type="entry name" value="Indole-3-glycerol_P_synth_dom"/>
</dbReference>
<dbReference type="InterPro" id="IPR001468">
    <property type="entry name" value="Indole-3-GlycerolPSynthase_CS"/>
</dbReference>
<dbReference type="InterPro" id="IPR011060">
    <property type="entry name" value="RibuloseP-bd_barrel"/>
</dbReference>
<dbReference type="NCBIfam" id="NF001370">
    <property type="entry name" value="PRK00278.1-2"/>
    <property type="match status" value="1"/>
</dbReference>
<dbReference type="NCBIfam" id="NF001373">
    <property type="entry name" value="PRK00278.1-6"/>
    <property type="match status" value="1"/>
</dbReference>
<dbReference type="NCBIfam" id="NF001377">
    <property type="entry name" value="PRK00278.2-4"/>
    <property type="match status" value="1"/>
</dbReference>
<dbReference type="PANTHER" id="PTHR22854:SF2">
    <property type="entry name" value="INDOLE-3-GLYCEROL-PHOSPHATE SYNTHASE"/>
    <property type="match status" value="1"/>
</dbReference>
<dbReference type="PANTHER" id="PTHR22854">
    <property type="entry name" value="TRYPTOPHAN BIOSYNTHESIS PROTEIN"/>
    <property type="match status" value="1"/>
</dbReference>
<dbReference type="Pfam" id="PF00218">
    <property type="entry name" value="IGPS"/>
    <property type="match status" value="1"/>
</dbReference>
<dbReference type="SUPFAM" id="SSF51366">
    <property type="entry name" value="Ribulose-phoshate binding barrel"/>
    <property type="match status" value="1"/>
</dbReference>
<dbReference type="PROSITE" id="PS00614">
    <property type="entry name" value="IGPS"/>
    <property type="match status" value="1"/>
</dbReference>
<sequence length="271" mass="29277">MTDILRKIEAYKREEIAAAKSRVSLDELRARIADQSSPRGFHAALAARRQKSEFGLIAEIKKASPSKGLIRPDFDPPALAKAYAAGGAACLSVLTDTPSFQGAPEFLTAARAACSLPALRKDFMFDTYQVFEARAWGADCILLIMASLTDDDAHRLEDAAGALGMDVLVEVHDAEEMERALRLSSPLIGINNRNLRTFEVDLAVSERLAPMVPADRLLVGESGIFTHADCRRLEKTGITTFLVGESLMRKDDVEAATRALLTGSASAVAAE</sequence>
<organism>
    <name type="scientific">Sinorhizobium fredii (strain NBRC 101917 / NGR234)</name>
    <dbReference type="NCBI Taxonomy" id="394"/>
    <lineage>
        <taxon>Bacteria</taxon>
        <taxon>Pseudomonadati</taxon>
        <taxon>Pseudomonadota</taxon>
        <taxon>Alphaproteobacteria</taxon>
        <taxon>Hyphomicrobiales</taxon>
        <taxon>Rhizobiaceae</taxon>
        <taxon>Sinorhizobium/Ensifer group</taxon>
        <taxon>Sinorhizobium</taxon>
    </lineage>
</organism>
<name>TRPC_SINFN</name>
<keyword id="KW-0028">Amino-acid biosynthesis</keyword>
<keyword id="KW-0057">Aromatic amino acid biosynthesis</keyword>
<keyword id="KW-0210">Decarboxylase</keyword>
<keyword id="KW-0456">Lyase</keyword>
<keyword id="KW-1185">Reference proteome</keyword>
<keyword id="KW-0822">Tryptophan biosynthesis</keyword>
<feature type="chain" id="PRO_1000198783" description="Indole-3-glycerol phosphate synthase">
    <location>
        <begin position="1"/>
        <end position="271"/>
    </location>
</feature>